<gene>
    <name evidence="2" type="primary">ychF</name>
    <name type="synonym">engD</name>
    <name type="ordered locus">Z1974</name>
    <name type="ordered locus">ECs1708</name>
</gene>
<name>YCHF_ECO57</name>
<dbReference type="EMBL" id="AE005174">
    <property type="protein sequence ID" value="AAG56061.1"/>
    <property type="molecule type" value="Genomic_DNA"/>
</dbReference>
<dbReference type="EMBL" id="BA000007">
    <property type="protein sequence ID" value="BAB35131.1"/>
    <property type="molecule type" value="Genomic_DNA"/>
</dbReference>
<dbReference type="PIR" id="D90842">
    <property type="entry name" value="D90842"/>
</dbReference>
<dbReference type="RefSeq" id="NP_309735.1">
    <property type="nucleotide sequence ID" value="NC_002695.1"/>
</dbReference>
<dbReference type="RefSeq" id="WP_000505866.1">
    <property type="nucleotide sequence ID" value="NZ_VOAI01000038.1"/>
</dbReference>
<dbReference type="SMR" id="P0ABU3"/>
<dbReference type="STRING" id="155864.Z1974"/>
<dbReference type="GeneID" id="75171314"/>
<dbReference type="GeneID" id="913155"/>
<dbReference type="KEGG" id="ece:Z1974"/>
<dbReference type="KEGG" id="ecs:ECs_1708"/>
<dbReference type="PATRIC" id="fig|386585.9.peg.1806"/>
<dbReference type="eggNOG" id="COG0012">
    <property type="taxonomic scope" value="Bacteria"/>
</dbReference>
<dbReference type="HOGENOM" id="CLU_018395_0_1_6"/>
<dbReference type="OMA" id="VLRCFDN"/>
<dbReference type="Proteomes" id="UP000000558">
    <property type="component" value="Chromosome"/>
</dbReference>
<dbReference type="Proteomes" id="UP000002519">
    <property type="component" value="Chromosome"/>
</dbReference>
<dbReference type="GO" id="GO:0005737">
    <property type="term" value="C:cytoplasm"/>
    <property type="evidence" value="ECO:0007669"/>
    <property type="project" value="TreeGrafter"/>
</dbReference>
<dbReference type="GO" id="GO:0005524">
    <property type="term" value="F:ATP binding"/>
    <property type="evidence" value="ECO:0007669"/>
    <property type="project" value="UniProtKB-UniRule"/>
</dbReference>
<dbReference type="GO" id="GO:0016887">
    <property type="term" value="F:ATP hydrolysis activity"/>
    <property type="evidence" value="ECO:0007669"/>
    <property type="project" value="UniProtKB-UniRule"/>
</dbReference>
<dbReference type="GO" id="GO:0005525">
    <property type="term" value="F:GTP binding"/>
    <property type="evidence" value="ECO:0007669"/>
    <property type="project" value="InterPro"/>
</dbReference>
<dbReference type="GO" id="GO:0046872">
    <property type="term" value="F:metal ion binding"/>
    <property type="evidence" value="ECO:0007669"/>
    <property type="project" value="UniProtKB-KW"/>
</dbReference>
<dbReference type="GO" id="GO:0043023">
    <property type="term" value="F:ribosomal large subunit binding"/>
    <property type="evidence" value="ECO:0007669"/>
    <property type="project" value="UniProtKB-UniRule"/>
</dbReference>
<dbReference type="CDD" id="cd04867">
    <property type="entry name" value="TGS_YchF_OLA1"/>
    <property type="match status" value="1"/>
</dbReference>
<dbReference type="CDD" id="cd01900">
    <property type="entry name" value="YchF"/>
    <property type="match status" value="1"/>
</dbReference>
<dbReference type="FunFam" id="1.10.150.300:FF:000002">
    <property type="entry name" value="Ribosome-binding ATPase YchF"/>
    <property type="match status" value="1"/>
</dbReference>
<dbReference type="FunFam" id="3.10.20.30:FF:000001">
    <property type="entry name" value="Ribosome-binding ATPase YchF"/>
    <property type="match status" value="1"/>
</dbReference>
<dbReference type="Gene3D" id="3.10.20.30">
    <property type="match status" value="1"/>
</dbReference>
<dbReference type="Gene3D" id="3.40.50.300">
    <property type="entry name" value="P-loop containing nucleotide triphosphate hydrolases"/>
    <property type="match status" value="1"/>
</dbReference>
<dbReference type="Gene3D" id="1.10.150.300">
    <property type="entry name" value="TGS-like domain"/>
    <property type="match status" value="1"/>
</dbReference>
<dbReference type="HAMAP" id="MF_00944">
    <property type="entry name" value="YchF_OLA1_ATPase"/>
    <property type="match status" value="1"/>
</dbReference>
<dbReference type="InterPro" id="IPR004396">
    <property type="entry name" value="ATPase_YchF/OLA1"/>
</dbReference>
<dbReference type="InterPro" id="IPR012675">
    <property type="entry name" value="Beta-grasp_dom_sf"/>
</dbReference>
<dbReference type="InterPro" id="IPR031167">
    <property type="entry name" value="G_OBG"/>
</dbReference>
<dbReference type="InterPro" id="IPR006073">
    <property type="entry name" value="GTP-bd"/>
</dbReference>
<dbReference type="InterPro" id="IPR027417">
    <property type="entry name" value="P-loop_NTPase"/>
</dbReference>
<dbReference type="InterPro" id="IPR004095">
    <property type="entry name" value="TGS"/>
</dbReference>
<dbReference type="InterPro" id="IPR012676">
    <property type="entry name" value="TGS-like"/>
</dbReference>
<dbReference type="InterPro" id="IPR023192">
    <property type="entry name" value="TGS-like_dom_sf"/>
</dbReference>
<dbReference type="InterPro" id="IPR013029">
    <property type="entry name" value="YchF_C"/>
</dbReference>
<dbReference type="InterPro" id="IPR041706">
    <property type="entry name" value="YchF_N"/>
</dbReference>
<dbReference type="NCBIfam" id="TIGR00092">
    <property type="entry name" value="redox-regulated ATPase YchF"/>
    <property type="match status" value="1"/>
</dbReference>
<dbReference type="PANTHER" id="PTHR23305">
    <property type="entry name" value="OBG GTPASE FAMILY"/>
    <property type="match status" value="1"/>
</dbReference>
<dbReference type="PANTHER" id="PTHR23305:SF18">
    <property type="entry name" value="OBG-TYPE G DOMAIN-CONTAINING PROTEIN"/>
    <property type="match status" value="1"/>
</dbReference>
<dbReference type="Pfam" id="PF01926">
    <property type="entry name" value="MMR_HSR1"/>
    <property type="match status" value="1"/>
</dbReference>
<dbReference type="Pfam" id="PF06071">
    <property type="entry name" value="YchF-GTPase_C"/>
    <property type="match status" value="1"/>
</dbReference>
<dbReference type="PIRSF" id="PIRSF006641">
    <property type="entry name" value="CHP00092"/>
    <property type="match status" value="1"/>
</dbReference>
<dbReference type="PRINTS" id="PR00326">
    <property type="entry name" value="GTP1OBG"/>
</dbReference>
<dbReference type="SUPFAM" id="SSF52540">
    <property type="entry name" value="P-loop containing nucleoside triphosphate hydrolases"/>
    <property type="match status" value="1"/>
</dbReference>
<dbReference type="SUPFAM" id="SSF81271">
    <property type="entry name" value="TGS-like"/>
    <property type="match status" value="1"/>
</dbReference>
<dbReference type="PROSITE" id="PS51710">
    <property type="entry name" value="G_OBG"/>
    <property type="match status" value="1"/>
</dbReference>
<dbReference type="PROSITE" id="PS51880">
    <property type="entry name" value="TGS"/>
    <property type="match status" value="1"/>
</dbReference>
<comment type="function">
    <text evidence="2">ATPase that binds to both the 70S ribosome and the 50S ribosomal subunit in a nucleotide-independent manner.</text>
</comment>
<comment type="cofactor">
    <cofactor evidence="1">
        <name>Mg(2+)</name>
        <dbReference type="ChEBI" id="CHEBI:18420"/>
    </cofactor>
</comment>
<comment type="similarity">
    <text evidence="2">Belongs to the TRAFAC class OBG-HflX-like GTPase superfamily. OBG GTPase family. YchF/OLA1 subfamily.</text>
</comment>
<keyword id="KW-0067">ATP-binding</keyword>
<keyword id="KW-0460">Magnesium</keyword>
<keyword id="KW-0479">Metal-binding</keyword>
<keyword id="KW-0547">Nucleotide-binding</keyword>
<keyword id="KW-1185">Reference proteome</keyword>
<organism>
    <name type="scientific">Escherichia coli O157:H7</name>
    <dbReference type="NCBI Taxonomy" id="83334"/>
    <lineage>
        <taxon>Bacteria</taxon>
        <taxon>Pseudomonadati</taxon>
        <taxon>Pseudomonadota</taxon>
        <taxon>Gammaproteobacteria</taxon>
        <taxon>Enterobacterales</taxon>
        <taxon>Enterobacteriaceae</taxon>
        <taxon>Escherichia</taxon>
    </lineage>
</organism>
<feature type="initiator methionine" description="Removed" evidence="1">
    <location>
        <position position="1"/>
    </location>
</feature>
<feature type="chain" id="PRO_0000201676" description="Ribosome-binding ATPase YchF">
    <location>
        <begin position="2"/>
        <end position="363"/>
    </location>
</feature>
<feature type="domain" description="OBG-type G">
    <location>
        <begin position="3"/>
        <end position="256"/>
    </location>
</feature>
<feature type="domain" description="TGS" evidence="3">
    <location>
        <begin position="278"/>
        <end position="361"/>
    </location>
</feature>
<feature type="binding site" evidence="2">
    <location>
        <begin position="12"/>
        <end position="17"/>
    </location>
    <ligand>
        <name>ATP</name>
        <dbReference type="ChEBI" id="CHEBI:30616"/>
    </ligand>
</feature>
<feature type="binding site" evidence="1">
    <location>
        <position position="16"/>
    </location>
    <ligand>
        <name>Mg(2+)</name>
        <dbReference type="ChEBI" id="CHEBI:18420"/>
    </ligand>
</feature>
<feature type="binding site" evidence="1">
    <location>
        <position position="36"/>
    </location>
    <ligand>
        <name>Mg(2+)</name>
        <dbReference type="ChEBI" id="CHEBI:18420"/>
    </ligand>
</feature>
<evidence type="ECO:0000250" key="1"/>
<evidence type="ECO:0000255" key="2">
    <source>
        <dbReference type="HAMAP-Rule" id="MF_00944"/>
    </source>
</evidence>
<evidence type="ECO:0000255" key="3">
    <source>
        <dbReference type="PROSITE-ProRule" id="PRU01228"/>
    </source>
</evidence>
<protein>
    <recommendedName>
        <fullName evidence="2">Ribosome-binding ATPase YchF</fullName>
    </recommendedName>
</protein>
<proteinExistence type="inferred from homology"/>
<sequence length="363" mass="39667">MGFKCGIVGLPNVGKSTLFNALTKAGIEAANFPFCTIEPNTGVVPMPDPRLDQLAEIVKPQRTLPTTMEFVDIAGLVKGASKGEGLGNQFLTNIRETEAIGHVVRCFENDNIIHVSGKVNPADDIEVINTELALADLDTCERAIHRVQKKAKGGDKDAKAELAVLEKCLPQLENAGMLRALDLSAEEKAAIRYLSFLTLKPTMYIANVNEDGFENNPYLDQVREIAAKEGSVVVPVCAAVEADIAELDDEERDEFMQELGLEEPGLNRVIRAGYKLLNLQTYFTAGVKEVRAWTIPVGATAPQAAGKIHTDFEKGFIRAQTISFEDFITYKGEQGAKEAGKMRAEGKDYIVKDGDVMNFLFNV</sequence>
<accession>P0ABU3</accession>
<accession>P31216</accession>
<accession>P76018</accession>
<reference key="1">
    <citation type="journal article" date="2001" name="Nature">
        <title>Genome sequence of enterohaemorrhagic Escherichia coli O157:H7.</title>
        <authorList>
            <person name="Perna N.T."/>
            <person name="Plunkett G. III"/>
            <person name="Burland V."/>
            <person name="Mau B."/>
            <person name="Glasner J.D."/>
            <person name="Rose D.J."/>
            <person name="Mayhew G.F."/>
            <person name="Evans P.S."/>
            <person name="Gregor J."/>
            <person name="Kirkpatrick H.A."/>
            <person name="Posfai G."/>
            <person name="Hackett J."/>
            <person name="Klink S."/>
            <person name="Boutin A."/>
            <person name="Shao Y."/>
            <person name="Miller L."/>
            <person name="Grotbeck E.J."/>
            <person name="Davis N.W."/>
            <person name="Lim A."/>
            <person name="Dimalanta E.T."/>
            <person name="Potamousis K."/>
            <person name="Apodaca J."/>
            <person name="Anantharaman T.S."/>
            <person name="Lin J."/>
            <person name="Yen G."/>
            <person name="Schwartz D.C."/>
            <person name="Welch R.A."/>
            <person name="Blattner F.R."/>
        </authorList>
    </citation>
    <scope>NUCLEOTIDE SEQUENCE [LARGE SCALE GENOMIC DNA]</scope>
    <source>
        <strain>O157:H7 / EDL933 / ATCC 700927 / EHEC</strain>
    </source>
</reference>
<reference key="2">
    <citation type="journal article" date="2001" name="DNA Res.">
        <title>Complete genome sequence of enterohemorrhagic Escherichia coli O157:H7 and genomic comparison with a laboratory strain K-12.</title>
        <authorList>
            <person name="Hayashi T."/>
            <person name="Makino K."/>
            <person name="Ohnishi M."/>
            <person name="Kurokawa K."/>
            <person name="Ishii K."/>
            <person name="Yokoyama K."/>
            <person name="Han C.-G."/>
            <person name="Ohtsubo E."/>
            <person name="Nakayama K."/>
            <person name="Murata T."/>
            <person name="Tanaka M."/>
            <person name="Tobe T."/>
            <person name="Iida T."/>
            <person name="Takami H."/>
            <person name="Honda T."/>
            <person name="Sasakawa C."/>
            <person name="Ogasawara N."/>
            <person name="Yasunaga T."/>
            <person name="Kuhara S."/>
            <person name="Shiba T."/>
            <person name="Hattori M."/>
            <person name="Shinagawa H."/>
        </authorList>
    </citation>
    <scope>NUCLEOTIDE SEQUENCE [LARGE SCALE GENOMIC DNA]</scope>
    <source>
        <strain>O157:H7 / Sakai / RIMD 0509952 / EHEC</strain>
    </source>
</reference>